<name>EXOC7_DROME</name>
<accession>Q9VSJ8</accession>
<accession>Q8T0E9</accession>
<feature type="chain" id="PRO_0000118963" description="Exocyst complex component 7">
    <location>
        <begin position="1"/>
        <end position="693"/>
    </location>
</feature>
<feature type="region of interest" description="Disordered" evidence="2">
    <location>
        <begin position="236"/>
        <end position="259"/>
    </location>
</feature>
<feature type="modified residue" description="Phosphoserine" evidence="3">
    <location>
        <position position="236"/>
    </location>
</feature>
<feature type="sequence conflict" description="In Ref. 3; AAL39511." evidence="5" ref="3">
    <original>L</original>
    <variation>F</variation>
    <location>
        <position position="543"/>
    </location>
</feature>
<evidence type="ECO:0000250" key="1"/>
<evidence type="ECO:0000256" key="2">
    <source>
        <dbReference type="SAM" id="MobiDB-lite"/>
    </source>
</evidence>
<evidence type="ECO:0000269" key="3">
    <source>
    </source>
</evidence>
<evidence type="ECO:0000303" key="4">
    <source>
    </source>
</evidence>
<evidence type="ECO:0000305" key="5"/>
<evidence type="ECO:0000312" key="6">
    <source>
        <dbReference type="EMBL" id="AAL39511.1"/>
    </source>
</evidence>
<evidence type="ECO:0000312" key="7">
    <source>
        <dbReference type="FlyBase" id="FBgn0266667"/>
    </source>
</evidence>
<comment type="function">
    <text evidence="4">Required for exocytosis. Thought to function in intracellular vesicle targeting and docking before SNARE complex formation.</text>
</comment>
<comment type="subunit">
    <text evidence="1">The exocyst complex is composed of Sec3/Exoc1, Sec5/Exoc2, Sec6/Exoc3, Sec8/Exoc4, Sec10/Exoc5, Sec15/Exoc6, Exo70/Exoc7 and Exo84/Exoc8.</text>
</comment>
<comment type="similarity">
    <text evidence="5">Belongs to the EXO70 family.</text>
</comment>
<proteinExistence type="evidence at protein level"/>
<dbReference type="EMBL" id="AE014296">
    <property type="protein sequence ID" value="AAF50421.2"/>
    <property type="molecule type" value="Genomic_DNA"/>
</dbReference>
<dbReference type="EMBL" id="AY069366">
    <property type="protein sequence ID" value="AAL39511.1"/>
    <property type="molecule type" value="mRNA"/>
</dbReference>
<dbReference type="RefSeq" id="NP_648222.3">
    <property type="nucleotide sequence ID" value="NM_139965.3"/>
</dbReference>
<dbReference type="SMR" id="Q9VSJ8"/>
<dbReference type="BioGRID" id="64372">
    <property type="interactions" value="35"/>
</dbReference>
<dbReference type="ComplexPortal" id="CPX-2465">
    <property type="entry name" value="Exocyst"/>
</dbReference>
<dbReference type="DIP" id="DIP-23867N"/>
<dbReference type="FunCoup" id="Q9VSJ8">
    <property type="interactions" value="1341"/>
</dbReference>
<dbReference type="IntAct" id="Q9VSJ8">
    <property type="interactions" value="2"/>
</dbReference>
<dbReference type="STRING" id="7227.FBpp0076339"/>
<dbReference type="iPTMnet" id="Q9VSJ8"/>
<dbReference type="PaxDb" id="7227-FBpp0076339"/>
<dbReference type="DNASU" id="38959"/>
<dbReference type="EnsemblMetazoa" id="FBtr0076612">
    <property type="protein sequence ID" value="FBpp0076339"/>
    <property type="gene ID" value="FBgn0266667"/>
</dbReference>
<dbReference type="GeneID" id="38959"/>
<dbReference type="KEGG" id="dme:Dmel_CG7127"/>
<dbReference type="UCSC" id="CG7127-RA">
    <property type="organism name" value="d. melanogaster"/>
</dbReference>
<dbReference type="AGR" id="FB:FBgn0266667"/>
<dbReference type="CTD" id="38959"/>
<dbReference type="FlyBase" id="FBgn0266667">
    <property type="gene designation" value="Exo70"/>
</dbReference>
<dbReference type="VEuPathDB" id="VectorBase:FBgn0266667"/>
<dbReference type="eggNOG" id="KOG2344">
    <property type="taxonomic scope" value="Eukaryota"/>
</dbReference>
<dbReference type="GeneTree" id="ENSGT00390000003595"/>
<dbReference type="HOGENOM" id="CLU_010236_4_0_1"/>
<dbReference type="InParanoid" id="Q9VSJ8"/>
<dbReference type="OMA" id="SNTIWFL"/>
<dbReference type="OrthoDB" id="1922221at2759"/>
<dbReference type="PhylomeDB" id="Q9VSJ8"/>
<dbReference type="Reactome" id="R-DME-264876">
    <property type="pathway name" value="Insulin processing"/>
</dbReference>
<dbReference type="Reactome" id="R-DME-5620916">
    <property type="pathway name" value="VxPx cargo-targeting to cilium"/>
</dbReference>
<dbReference type="SignaLink" id="Q9VSJ8"/>
<dbReference type="BioGRID-ORCS" id="38959">
    <property type="hits" value="0 hits in 1 CRISPR screen"/>
</dbReference>
<dbReference type="ChiTaRS" id="Exo70">
    <property type="organism name" value="fly"/>
</dbReference>
<dbReference type="GenomeRNAi" id="38959"/>
<dbReference type="PRO" id="PR:Q9VSJ8"/>
<dbReference type="Proteomes" id="UP000000803">
    <property type="component" value="Chromosome 3L"/>
</dbReference>
<dbReference type="Bgee" id="FBgn0266667">
    <property type="expression patterns" value="Expressed in second segment of antenna (Drosophila) and 59 other cell types or tissues"/>
</dbReference>
<dbReference type="ExpressionAtlas" id="Q9VSJ8">
    <property type="expression patterns" value="baseline and differential"/>
</dbReference>
<dbReference type="GO" id="GO:0000145">
    <property type="term" value="C:exocyst"/>
    <property type="evidence" value="ECO:0000250"/>
    <property type="project" value="FlyBase"/>
</dbReference>
<dbReference type="GO" id="GO:0043195">
    <property type="term" value="C:terminal bouton"/>
    <property type="evidence" value="ECO:0000314"/>
    <property type="project" value="FlyBase"/>
</dbReference>
<dbReference type="GO" id="GO:0008013">
    <property type="term" value="F:beta-catenin binding"/>
    <property type="evidence" value="ECO:0000353"/>
    <property type="project" value="FlyBase"/>
</dbReference>
<dbReference type="GO" id="GO:0005546">
    <property type="term" value="F:phosphatidylinositol-4,5-bisphosphate binding"/>
    <property type="evidence" value="ECO:0000250"/>
    <property type="project" value="FlyBase"/>
</dbReference>
<dbReference type="GO" id="GO:0006887">
    <property type="term" value="P:exocytosis"/>
    <property type="evidence" value="ECO:0000318"/>
    <property type="project" value="GO_Central"/>
</dbReference>
<dbReference type="GO" id="GO:0007269">
    <property type="term" value="P:neurotransmitter secretion"/>
    <property type="evidence" value="ECO:0000303"/>
    <property type="project" value="FlyBase"/>
</dbReference>
<dbReference type="GO" id="GO:0015031">
    <property type="term" value="P:protein transport"/>
    <property type="evidence" value="ECO:0007669"/>
    <property type="project" value="UniProtKB-KW"/>
</dbReference>
<dbReference type="GO" id="GO:0051124">
    <property type="term" value="P:synaptic assembly at neuromuscular junction"/>
    <property type="evidence" value="ECO:0000315"/>
    <property type="project" value="FlyBase"/>
</dbReference>
<dbReference type="GO" id="GO:0016081">
    <property type="term" value="P:synaptic vesicle docking"/>
    <property type="evidence" value="ECO:0000303"/>
    <property type="project" value="FlyBase"/>
</dbReference>
<dbReference type="GO" id="GO:0016080">
    <property type="term" value="P:synaptic vesicle targeting"/>
    <property type="evidence" value="ECO:0000303"/>
    <property type="project" value="FlyBase"/>
</dbReference>
<dbReference type="GO" id="GO:0016192">
    <property type="term" value="P:vesicle-mediated transport"/>
    <property type="evidence" value="ECO:0000250"/>
    <property type="project" value="FlyBase"/>
</dbReference>
<dbReference type="FunFam" id="1.20.1280.170:FF:000004">
    <property type="entry name" value="Exocyst complex component 7"/>
    <property type="match status" value="1"/>
</dbReference>
<dbReference type="FunFam" id="1.20.1280.170:FF:000005">
    <property type="entry name" value="Exocyst complex component 7"/>
    <property type="match status" value="1"/>
</dbReference>
<dbReference type="Gene3D" id="1.20.1280.170">
    <property type="entry name" value="Exocyst complex component Exo70"/>
    <property type="match status" value="2"/>
</dbReference>
<dbReference type="InterPro" id="IPR016159">
    <property type="entry name" value="Cullin_repeat-like_dom_sf"/>
</dbReference>
<dbReference type="InterPro" id="IPR004140">
    <property type="entry name" value="Exo70"/>
</dbReference>
<dbReference type="InterPro" id="IPR046364">
    <property type="entry name" value="Exo70_C"/>
</dbReference>
<dbReference type="PANTHER" id="PTHR12542:SF41">
    <property type="entry name" value="EXOCYST COMPLEX COMPONENT 7"/>
    <property type="match status" value="1"/>
</dbReference>
<dbReference type="PANTHER" id="PTHR12542">
    <property type="entry name" value="EXOCYST COMPLEX PROTEIN EXO70"/>
    <property type="match status" value="1"/>
</dbReference>
<dbReference type="Pfam" id="PF03081">
    <property type="entry name" value="Exo70_C"/>
    <property type="match status" value="1"/>
</dbReference>
<dbReference type="Pfam" id="PF20669">
    <property type="entry name" value="Exo70_N"/>
    <property type="match status" value="1"/>
</dbReference>
<dbReference type="SUPFAM" id="SSF74788">
    <property type="entry name" value="Cullin repeat-like"/>
    <property type="match status" value="1"/>
</dbReference>
<gene>
    <name evidence="7" type="primary">Exo70</name>
    <name evidence="7" type="ORF">CG7127</name>
</gene>
<sequence length="693" mass="80026">MNNLDSSLQAHNKLEKEATNLALLKDRVDKYHDLSTQMSSILTIFEKRLGNLEQTILPVYQETEQLQKRQQNLEATLNCLESVLSHYDVSQEVCQLIHQGPVEGNISVFLDALAKLRDANDYFRHNNSQSVELENVTSLFNTGCEGLSQHYSMLLKKHSAPLKPVELLDLIYIEDDSSDEYTSFRQLSQTTREELYTISHWLEQNLREYTNIYATERGEVVLRSLQLLKDHQKSNSWGHEALRPRHSGRQTEPKKTTSARLQQIFEKKANKLYLRATQTIEQSTGFSIKKASSHSDHLTSEDLMDGDQELDKYLVMLLGLQRLLNWERAIMIDIIPQSKHNEVFATLAYNAIDLVVKDAEAITQRILRCISRKEWTSALGIFSALKRVILLQPDIDRTYDPAQREQLKKVLKKLQHTGAKALEHFLDVVKGESSTNIVGQSNVPKDATVHELTSNTIWFIEHLYDHFDVIGSILAQDVLYSTQLDTILMKKALPVEERNKALLAIYIKKALAELNLSIMNKCEQYNDQATKHLFRLNNIHYILKSLQRSNLIDLVTLAEPECEHSYMEMIRELKASYQKTWSKMLVGIYSLDELPKPVAGKVKDKDRSVLKERFSNFNKDFEEACKIQRGISIPDVILREGIKRDNVEHILPIYNRFYEIYSGVHFSKNPDKYVKYRQHEINAMLSKLFDDSA</sequence>
<protein>
    <recommendedName>
        <fullName>Exocyst complex component 7</fullName>
    </recommendedName>
    <alternativeName>
        <fullName>Exocyst complex component Exo70</fullName>
    </alternativeName>
</protein>
<reference evidence="5" key="1">
    <citation type="journal article" date="2000" name="Science">
        <title>The genome sequence of Drosophila melanogaster.</title>
        <authorList>
            <person name="Adams M.D."/>
            <person name="Celniker S.E."/>
            <person name="Holt R.A."/>
            <person name="Evans C.A."/>
            <person name="Gocayne J.D."/>
            <person name="Amanatides P.G."/>
            <person name="Scherer S.E."/>
            <person name="Li P.W."/>
            <person name="Hoskins R.A."/>
            <person name="Galle R.F."/>
            <person name="George R.A."/>
            <person name="Lewis S.E."/>
            <person name="Richards S."/>
            <person name="Ashburner M."/>
            <person name="Henderson S.N."/>
            <person name="Sutton G.G."/>
            <person name="Wortman J.R."/>
            <person name="Yandell M.D."/>
            <person name="Zhang Q."/>
            <person name="Chen L.X."/>
            <person name="Brandon R.C."/>
            <person name="Rogers Y.-H.C."/>
            <person name="Blazej R.G."/>
            <person name="Champe M."/>
            <person name="Pfeiffer B.D."/>
            <person name="Wan K.H."/>
            <person name="Doyle C."/>
            <person name="Baxter E.G."/>
            <person name="Helt G."/>
            <person name="Nelson C.R."/>
            <person name="Miklos G.L.G."/>
            <person name="Abril J.F."/>
            <person name="Agbayani A."/>
            <person name="An H.-J."/>
            <person name="Andrews-Pfannkoch C."/>
            <person name="Baldwin D."/>
            <person name="Ballew R.M."/>
            <person name="Basu A."/>
            <person name="Baxendale J."/>
            <person name="Bayraktaroglu L."/>
            <person name="Beasley E.M."/>
            <person name="Beeson K.Y."/>
            <person name="Benos P.V."/>
            <person name="Berman B.P."/>
            <person name="Bhandari D."/>
            <person name="Bolshakov S."/>
            <person name="Borkova D."/>
            <person name="Botchan M.R."/>
            <person name="Bouck J."/>
            <person name="Brokstein P."/>
            <person name="Brottier P."/>
            <person name="Burtis K.C."/>
            <person name="Busam D.A."/>
            <person name="Butler H."/>
            <person name="Cadieu E."/>
            <person name="Center A."/>
            <person name="Chandra I."/>
            <person name="Cherry J.M."/>
            <person name="Cawley S."/>
            <person name="Dahlke C."/>
            <person name="Davenport L.B."/>
            <person name="Davies P."/>
            <person name="de Pablos B."/>
            <person name="Delcher A."/>
            <person name="Deng Z."/>
            <person name="Mays A.D."/>
            <person name="Dew I."/>
            <person name="Dietz S.M."/>
            <person name="Dodson K."/>
            <person name="Doup L.E."/>
            <person name="Downes M."/>
            <person name="Dugan-Rocha S."/>
            <person name="Dunkov B.C."/>
            <person name="Dunn P."/>
            <person name="Durbin K.J."/>
            <person name="Evangelista C.C."/>
            <person name="Ferraz C."/>
            <person name="Ferriera S."/>
            <person name="Fleischmann W."/>
            <person name="Fosler C."/>
            <person name="Gabrielian A.E."/>
            <person name="Garg N.S."/>
            <person name="Gelbart W.M."/>
            <person name="Glasser K."/>
            <person name="Glodek A."/>
            <person name="Gong F."/>
            <person name="Gorrell J.H."/>
            <person name="Gu Z."/>
            <person name="Guan P."/>
            <person name="Harris M."/>
            <person name="Harris N.L."/>
            <person name="Harvey D.A."/>
            <person name="Heiman T.J."/>
            <person name="Hernandez J.R."/>
            <person name="Houck J."/>
            <person name="Hostin D."/>
            <person name="Houston K.A."/>
            <person name="Howland T.J."/>
            <person name="Wei M.-H."/>
            <person name="Ibegwam C."/>
            <person name="Jalali M."/>
            <person name="Kalush F."/>
            <person name="Karpen G.H."/>
            <person name="Ke Z."/>
            <person name="Kennison J.A."/>
            <person name="Ketchum K.A."/>
            <person name="Kimmel B.E."/>
            <person name="Kodira C.D."/>
            <person name="Kraft C.L."/>
            <person name="Kravitz S."/>
            <person name="Kulp D."/>
            <person name="Lai Z."/>
            <person name="Lasko P."/>
            <person name="Lei Y."/>
            <person name="Levitsky A.A."/>
            <person name="Li J.H."/>
            <person name="Li Z."/>
            <person name="Liang Y."/>
            <person name="Lin X."/>
            <person name="Liu X."/>
            <person name="Mattei B."/>
            <person name="McIntosh T.C."/>
            <person name="McLeod M.P."/>
            <person name="McPherson D."/>
            <person name="Merkulov G."/>
            <person name="Milshina N.V."/>
            <person name="Mobarry C."/>
            <person name="Morris J."/>
            <person name="Moshrefi A."/>
            <person name="Mount S.M."/>
            <person name="Moy M."/>
            <person name="Murphy B."/>
            <person name="Murphy L."/>
            <person name="Muzny D.M."/>
            <person name="Nelson D.L."/>
            <person name="Nelson D.R."/>
            <person name="Nelson K.A."/>
            <person name="Nixon K."/>
            <person name="Nusskern D.R."/>
            <person name="Pacleb J.M."/>
            <person name="Palazzolo M."/>
            <person name="Pittman G.S."/>
            <person name="Pan S."/>
            <person name="Pollard J."/>
            <person name="Puri V."/>
            <person name="Reese M.G."/>
            <person name="Reinert K."/>
            <person name="Remington K."/>
            <person name="Saunders R.D.C."/>
            <person name="Scheeler F."/>
            <person name="Shen H."/>
            <person name="Shue B.C."/>
            <person name="Siden-Kiamos I."/>
            <person name="Simpson M."/>
            <person name="Skupski M.P."/>
            <person name="Smith T.J."/>
            <person name="Spier E."/>
            <person name="Spradling A.C."/>
            <person name="Stapleton M."/>
            <person name="Strong R."/>
            <person name="Sun E."/>
            <person name="Svirskas R."/>
            <person name="Tector C."/>
            <person name="Turner R."/>
            <person name="Venter E."/>
            <person name="Wang A.H."/>
            <person name="Wang X."/>
            <person name="Wang Z.-Y."/>
            <person name="Wassarman D.A."/>
            <person name="Weinstock G.M."/>
            <person name="Weissenbach J."/>
            <person name="Williams S.M."/>
            <person name="Woodage T."/>
            <person name="Worley K.C."/>
            <person name="Wu D."/>
            <person name="Yang S."/>
            <person name="Yao Q.A."/>
            <person name="Ye J."/>
            <person name="Yeh R.-F."/>
            <person name="Zaveri J.S."/>
            <person name="Zhan M."/>
            <person name="Zhang G."/>
            <person name="Zhao Q."/>
            <person name="Zheng L."/>
            <person name="Zheng X.H."/>
            <person name="Zhong F.N."/>
            <person name="Zhong W."/>
            <person name="Zhou X."/>
            <person name="Zhu S.C."/>
            <person name="Zhu X."/>
            <person name="Smith H.O."/>
            <person name="Gibbs R.A."/>
            <person name="Myers E.W."/>
            <person name="Rubin G.M."/>
            <person name="Venter J.C."/>
        </authorList>
    </citation>
    <scope>NUCLEOTIDE SEQUENCE [LARGE SCALE GENOMIC DNA]</scope>
    <source>
        <strain>Berkeley</strain>
    </source>
</reference>
<reference key="2">
    <citation type="journal article" date="2002" name="Genome Biol.">
        <title>Annotation of the Drosophila melanogaster euchromatic genome: a systematic review.</title>
        <authorList>
            <person name="Misra S."/>
            <person name="Crosby M.A."/>
            <person name="Mungall C.J."/>
            <person name="Matthews B.B."/>
            <person name="Campbell K.S."/>
            <person name="Hradecky P."/>
            <person name="Huang Y."/>
            <person name="Kaminker J.S."/>
            <person name="Millburn G.H."/>
            <person name="Prochnik S.E."/>
            <person name="Smith C.D."/>
            <person name="Tupy J.L."/>
            <person name="Whitfield E.J."/>
            <person name="Bayraktaroglu L."/>
            <person name="Berman B.P."/>
            <person name="Bettencourt B.R."/>
            <person name="Celniker S.E."/>
            <person name="de Grey A.D.N.J."/>
            <person name="Drysdale R.A."/>
            <person name="Harris N.L."/>
            <person name="Richter J."/>
            <person name="Russo S."/>
            <person name="Schroeder A.J."/>
            <person name="Shu S.Q."/>
            <person name="Stapleton M."/>
            <person name="Yamada C."/>
            <person name="Ashburner M."/>
            <person name="Gelbart W.M."/>
            <person name="Rubin G.M."/>
            <person name="Lewis S.E."/>
        </authorList>
    </citation>
    <scope>GENOME REANNOTATION</scope>
    <source>
        <strain>Berkeley</strain>
    </source>
</reference>
<reference key="3">
    <citation type="journal article" date="2002" name="Genome Biol.">
        <title>A Drosophila full-length cDNA resource.</title>
        <authorList>
            <person name="Stapleton M."/>
            <person name="Carlson J.W."/>
            <person name="Brokstein P."/>
            <person name="Yu C."/>
            <person name="Champe M."/>
            <person name="George R.A."/>
            <person name="Guarin H."/>
            <person name="Kronmiller B."/>
            <person name="Pacleb J.M."/>
            <person name="Park S."/>
            <person name="Wan K.H."/>
            <person name="Rubin G.M."/>
            <person name="Celniker S.E."/>
        </authorList>
    </citation>
    <scope>NUCLEOTIDE SEQUENCE [LARGE SCALE MRNA]</scope>
    <source>
        <strain>Berkeley</strain>
        <tissue>Embryo</tissue>
    </source>
</reference>
<reference evidence="5" key="4">
    <citation type="journal article" date="2000" name="J. Cell Biol.">
        <title>A genomic analysis of membrane trafficking and neurotransmitter release in Drosophila.</title>
        <authorList>
            <person name="Littleton J.T."/>
        </authorList>
    </citation>
    <scope>FUNCTION</scope>
    <scope>SUBUNIT</scope>
</reference>
<reference key="5">
    <citation type="journal article" date="2008" name="J. Proteome Res.">
        <title>Phosphoproteome analysis of Drosophila melanogaster embryos.</title>
        <authorList>
            <person name="Zhai B."/>
            <person name="Villen J."/>
            <person name="Beausoleil S.A."/>
            <person name="Mintseris J."/>
            <person name="Gygi S.P."/>
        </authorList>
    </citation>
    <scope>PHOSPHORYLATION [LARGE SCALE ANALYSIS] AT SER-236</scope>
    <scope>IDENTIFICATION BY MASS SPECTROMETRY</scope>
    <source>
        <tissue>Embryo</tissue>
    </source>
</reference>
<organism evidence="6">
    <name type="scientific">Drosophila melanogaster</name>
    <name type="common">Fruit fly</name>
    <dbReference type="NCBI Taxonomy" id="7227"/>
    <lineage>
        <taxon>Eukaryota</taxon>
        <taxon>Metazoa</taxon>
        <taxon>Ecdysozoa</taxon>
        <taxon>Arthropoda</taxon>
        <taxon>Hexapoda</taxon>
        <taxon>Insecta</taxon>
        <taxon>Pterygota</taxon>
        <taxon>Neoptera</taxon>
        <taxon>Endopterygota</taxon>
        <taxon>Diptera</taxon>
        <taxon>Brachycera</taxon>
        <taxon>Muscomorpha</taxon>
        <taxon>Ephydroidea</taxon>
        <taxon>Drosophilidae</taxon>
        <taxon>Drosophila</taxon>
        <taxon>Sophophora</taxon>
    </lineage>
</organism>
<keyword id="KW-0268">Exocytosis</keyword>
<keyword id="KW-0597">Phosphoprotein</keyword>
<keyword id="KW-0653">Protein transport</keyword>
<keyword id="KW-1185">Reference proteome</keyword>
<keyword id="KW-0813">Transport</keyword>